<gene>
    <name type="primary">TY1A-DR5</name>
    <name type="synonym">YDRWTy1-4 GAG</name>
    <name type="ordered locus">YDR316W-A</name>
    <name type="ORF">D9740.1a</name>
</gene>
<keyword id="KW-0963">Cytoplasm</keyword>
<keyword id="KW-0597">Phosphoprotein</keyword>
<keyword id="KW-1185">Reference proteome</keyword>
<keyword id="KW-0688">Ribosomal frameshifting</keyword>
<keyword id="KW-0694">RNA-binding</keyword>
<keyword id="KW-0814">Transposable element</keyword>
<organism>
    <name type="scientific">Saccharomyces cerevisiae (strain ATCC 204508 / S288c)</name>
    <name type="common">Baker's yeast</name>
    <dbReference type="NCBI Taxonomy" id="559292"/>
    <lineage>
        <taxon>Eukaryota</taxon>
        <taxon>Fungi</taxon>
        <taxon>Dikarya</taxon>
        <taxon>Ascomycota</taxon>
        <taxon>Saccharomycotina</taxon>
        <taxon>Saccharomycetes</taxon>
        <taxon>Saccharomycetales</taxon>
        <taxon>Saccharomycetaceae</taxon>
        <taxon>Saccharomyces</taxon>
    </lineage>
</organism>
<sequence length="440" mass="49129">MESQQLSNYPHISHGSACASVTSKEVHTNQDPLDVSASKIQEYDKASTKANSQQTTTPASSAVPENPHHASPQPASVPPPQNGPYPQQCMMTQNQANPSGWSFYGHPSMIPYTPYQMSPMYFPPGPQSQFPQYPSSVGTPLSTPSPESGNTFTDSSSADSDMTSTKKYVRPPPMLTSPNDFPNWVKTYIKFLQNSNLGGIIPTVNGKPVRQITDDELTFLYNTFQIFAPSQFLPTWVKDILSVDYTDIMKILSKSIEKMQSDTQEANDIVTLANLQYNGSTPADAFETKVTNIIDRLNNNGIHINNKVACQLIMRGLSGEYKFLRYTRHRHLNMTVAELFLDIHAIYEEQQGSRNSKPNYRRNPSDEKNDSRSYTNTTKPKVIARNPQKTNNSKSKTARAHNVSTSNNSPSTDNDSISKSTTEPIQLNNKHDLHLRPETY</sequence>
<comment type="function">
    <text evidence="1">Capsid protein (CA) is the structural component of the virus-like particle (VLP), forming the shell that encapsulates the retrotransposons dimeric RNA genome. The particles are assembled from trimer-clustered units and there are holes in the capsid shells that allow for the diffusion of macromolecules. CA also has nucleocapsid-like chaperone activity, promoting primer tRNA(i)-Met annealing to the multipartite primer-binding site (PBS), dimerization of Ty1 RNA and initiation of reverse transcription (By similarity).</text>
</comment>
<comment type="subunit">
    <text evidence="1">Homotrimer.</text>
</comment>
<comment type="subcellular location">
    <subcellularLocation>
        <location evidence="1">Cytoplasm</location>
    </subcellularLocation>
</comment>
<comment type="alternative products">
    <event type="ribosomal frameshifting"/>
    <isoform>
        <id>P0CX65-1</id>
        <name>Transposon Ty1-DR5 Gag polyprotein</name>
        <sequence type="displayed"/>
    </isoform>
    <isoform>
        <id>P0C2I2-1</id>
        <name>Transposon Ty1-DR5 Gag-Pol polyprotein</name>
        <sequence type="external"/>
    </isoform>
    <text evidence="1">The Gag-Pol polyprotein is generated by a +1 ribosomal frameshift between the codons for Leu-435 and Gly-436. The ratio of Gag:Gag-Pol varies between 20:1 and 5:1 (By similarity).</text>
</comment>
<comment type="induction">
    <text evidence="4">Ty1-DR5 is a weakly expressed element. Induced under amino acid starvation conditions by GCN4.</text>
</comment>
<comment type="domain">
    <text evidence="1">The C-terminal RNA-binding region of CA is sufficient for all its nucleocapsid-like chaperone activities.</text>
</comment>
<comment type="miscellaneous">
    <text>Retrotransposons are mobile genetic entities that are able to replicate via an RNA intermediate and a reverse transcription step. In contrast to retroviruses, retrotransposons are non-infectious, lack an envelope and remain intracellular. Ty1 retrotransposons belong to the copia elements (pseudoviridae).</text>
</comment>
<comment type="miscellaneous">
    <molecule>Isoform Transposon Ty1-DR5 Gag polyprotein</molecule>
    <text>Produced by conventional translation.</text>
</comment>
<feature type="chain" id="PRO_0000203500" description="Transposon Ty1-DR5 Gag polyprotein">
    <location>
        <begin position="1"/>
        <end position="440"/>
    </location>
</feature>
<feature type="chain" id="PRO_0000279030" description="Capsid protein" evidence="1">
    <location>
        <begin position="1"/>
        <end position="401"/>
    </location>
</feature>
<feature type="peptide" id="PRO_0000279031" description="Gag-p4" evidence="1">
    <location>
        <begin position="402"/>
        <end position="440"/>
    </location>
</feature>
<feature type="region of interest" description="Disordered" evidence="3">
    <location>
        <begin position="1"/>
        <end position="93"/>
    </location>
</feature>
<feature type="region of interest" description="Disordered" evidence="3">
    <location>
        <begin position="126"/>
        <end position="173"/>
    </location>
</feature>
<feature type="region of interest" description="RNA-binding" evidence="1">
    <location>
        <begin position="299"/>
        <end position="401"/>
    </location>
</feature>
<feature type="region of interest" description="Disordered" evidence="3">
    <location>
        <begin position="352"/>
        <end position="440"/>
    </location>
</feature>
<feature type="compositionally biased region" description="Polar residues" evidence="3">
    <location>
        <begin position="1"/>
        <end position="10"/>
    </location>
</feature>
<feature type="compositionally biased region" description="Polar residues" evidence="3">
    <location>
        <begin position="48"/>
        <end position="60"/>
    </location>
</feature>
<feature type="compositionally biased region" description="Polar residues" evidence="3">
    <location>
        <begin position="127"/>
        <end position="152"/>
    </location>
</feature>
<feature type="compositionally biased region" description="Low complexity" evidence="3">
    <location>
        <begin position="153"/>
        <end position="165"/>
    </location>
</feature>
<feature type="compositionally biased region" description="Low complexity" evidence="3">
    <location>
        <begin position="402"/>
        <end position="418"/>
    </location>
</feature>
<feature type="compositionally biased region" description="Polar residues" evidence="3">
    <location>
        <begin position="419"/>
        <end position="428"/>
    </location>
</feature>
<feature type="compositionally biased region" description="Basic and acidic residues" evidence="3">
    <location>
        <begin position="429"/>
        <end position="440"/>
    </location>
</feature>
<feature type="site" description="Cleavage; by Ty1 protease" evidence="1">
    <location>
        <begin position="401"/>
        <end position="402"/>
    </location>
</feature>
<feature type="modified residue" description="Phosphoserine" evidence="2">
    <location>
        <position position="416"/>
    </location>
</feature>
<protein>
    <recommendedName>
        <fullName>Transposon Ty1-DR5 Gag polyprotein</fullName>
    </recommendedName>
    <alternativeName>
        <fullName>Gag-p49</fullName>
    </alternativeName>
    <alternativeName>
        <fullName>Transposon Ty1 protein A</fullName>
        <shortName>TY1A</shortName>
        <shortName>TYA</shortName>
    </alternativeName>
    <alternativeName>
        <fullName>p58</fullName>
    </alternativeName>
    <component>
        <recommendedName>
            <fullName>Capsid protein</fullName>
            <shortName>CA</shortName>
        </recommendedName>
        <alternativeName>
            <fullName>Gag-p45</fullName>
        </alternativeName>
        <alternativeName>
            <fullName>p54</fullName>
        </alternativeName>
    </component>
    <component>
        <recommendedName>
            <fullName>Gag-p4</fullName>
        </recommendedName>
    </component>
</protein>
<dbReference type="EMBL" id="U32517">
    <property type="status" value="NOT_ANNOTATED_CDS"/>
    <property type="molecule type" value="Genomic_DNA"/>
</dbReference>
<dbReference type="EMBL" id="BK006938">
    <property type="protein sequence ID" value="DAA12157.1"/>
    <property type="molecule type" value="Genomic_DNA"/>
</dbReference>
<dbReference type="PIR" id="S53588">
    <property type="entry name" value="S53588"/>
</dbReference>
<dbReference type="RefSeq" id="NP_013766.1">
    <molecule id="P0CX65-1"/>
    <property type="nucleotide sequence ID" value="NM_001182548.1"/>
</dbReference>
<dbReference type="RefSeq" id="NP_058151.1">
    <molecule id="P0CX65-1"/>
    <property type="nucleotide sequence ID" value="NM_001184424.1"/>
</dbReference>
<dbReference type="RefSeq" id="NP_058156.1">
    <molecule id="P0CX65-1"/>
    <property type="nucleotide sequence ID" value="NM_001184429.1"/>
</dbReference>
<dbReference type="RefSeq" id="NP_058166.1">
    <molecule id="P0CX65-1"/>
    <property type="nucleotide sequence ID" value="NM_001184399.1"/>
</dbReference>
<dbReference type="SMR" id="P0CX65"/>
<dbReference type="BioGRID" id="32371">
    <property type="interactions" value="2"/>
</dbReference>
<dbReference type="BioGRID" id="33412">
    <property type="interactions" value="5"/>
</dbReference>
<dbReference type="BioGRID" id="35226">
    <property type="interactions" value="5"/>
</dbReference>
<dbReference type="BioGRID" id="36913">
    <property type="interactions" value="2"/>
</dbReference>
<dbReference type="FunCoup" id="P0CX65">
    <property type="interactions" value="123"/>
</dbReference>
<dbReference type="IntAct" id="P0CX65">
    <property type="interactions" value="1"/>
</dbReference>
<dbReference type="MINT" id="P0CX65"/>
<dbReference type="GlyGen" id="P0CX65">
    <property type="glycosylation" value="2 sites"/>
</dbReference>
<dbReference type="PaxDb" id="4932-YDR316W-A"/>
<dbReference type="PeptideAtlas" id="P0CX65"/>
<dbReference type="GeneID" id="851913"/>
<dbReference type="KEGG" id="sce:YDR316W-A"/>
<dbReference type="KEGG" id="sce:YER159C-A"/>
<dbReference type="KEGG" id="sce:YGR161C-C"/>
<dbReference type="KEGG" id="sce:YMR051C"/>
<dbReference type="AGR" id="SGD:S000007398"/>
<dbReference type="SGD" id="S000007398">
    <property type="gene designation" value="YDR316W-A"/>
</dbReference>
<dbReference type="VEuPathDB" id="FungiDB:YDR316W-A"/>
<dbReference type="VEuPathDB" id="FungiDB:YER159C-A"/>
<dbReference type="VEuPathDB" id="FungiDB:YGR161C-C"/>
<dbReference type="VEuPathDB" id="FungiDB:YMR051C"/>
<dbReference type="eggNOG" id="KOG0017">
    <property type="taxonomic scope" value="Eukaryota"/>
</dbReference>
<dbReference type="HOGENOM" id="CLU_045291_1_0_1"/>
<dbReference type="InParanoid" id="P0CX65"/>
<dbReference type="OrthoDB" id="4046078at2759"/>
<dbReference type="Proteomes" id="UP000002311">
    <property type="component" value="Chromosome IV"/>
</dbReference>
<dbReference type="RNAct" id="P0CX65">
    <property type="molecule type" value="protein"/>
</dbReference>
<dbReference type="GO" id="GO:0005737">
    <property type="term" value="C:cytoplasm"/>
    <property type="evidence" value="ECO:0007669"/>
    <property type="project" value="UniProtKB-SubCell"/>
</dbReference>
<dbReference type="GO" id="GO:0003723">
    <property type="term" value="F:RNA binding"/>
    <property type="evidence" value="ECO:0007669"/>
    <property type="project" value="UniProtKB-KW"/>
</dbReference>
<dbReference type="GO" id="GO:0075523">
    <property type="term" value="P:viral translational frameshifting"/>
    <property type="evidence" value="ECO:0007669"/>
    <property type="project" value="UniProtKB-KW"/>
</dbReference>
<dbReference type="InterPro" id="IPR015820">
    <property type="entry name" value="TYA"/>
</dbReference>
<dbReference type="Pfam" id="PF01021">
    <property type="entry name" value="TYA"/>
    <property type="match status" value="1"/>
</dbReference>
<proteinExistence type="evidence at transcript level"/>
<name>YD14A_YEAST</name>
<reference key="1">
    <citation type="journal article" date="1997" name="Nature">
        <title>The nucleotide sequence of Saccharomyces cerevisiae chromosome IV.</title>
        <authorList>
            <person name="Jacq C."/>
            <person name="Alt-Moerbe J."/>
            <person name="Andre B."/>
            <person name="Arnold W."/>
            <person name="Bahr A."/>
            <person name="Ballesta J.P.G."/>
            <person name="Bargues M."/>
            <person name="Baron L."/>
            <person name="Becker A."/>
            <person name="Biteau N."/>
            <person name="Bloecker H."/>
            <person name="Blugeon C."/>
            <person name="Boskovic J."/>
            <person name="Brandt P."/>
            <person name="Brueckner M."/>
            <person name="Buitrago M.J."/>
            <person name="Coster F."/>
            <person name="Delaveau T."/>
            <person name="del Rey F."/>
            <person name="Dujon B."/>
            <person name="Eide L.G."/>
            <person name="Garcia-Cantalejo J.M."/>
            <person name="Goffeau A."/>
            <person name="Gomez-Peris A."/>
            <person name="Granotier C."/>
            <person name="Hanemann V."/>
            <person name="Hankeln T."/>
            <person name="Hoheisel J.D."/>
            <person name="Jaeger W."/>
            <person name="Jimenez A."/>
            <person name="Jonniaux J.-L."/>
            <person name="Kraemer C."/>
            <person name="Kuester H."/>
            <person name="Laamanen P."/>
            <person name="Legros Y."/>
            <person name="Louis E.J."/>
            <person name="Moeller-Rieker S."/>
            <person name="Monnet A."/>
            <person name="Moro M."/>
            <person name="Mueller-Auer S."/>
            <person name="Nussbaumer B."/>
            <person name="Paricio N."/>
            <person name="Paulin L."/>
            <person name="Perea J."/>
            <person name="Perez-Alonso M."/>
            <person name="Perez-Ortin J.E."/>
            <person name="Pohl T.M."/>
            <person name="Prydz H."/>
            <person name="Purnelle B."/>
            <person name="Rasmussen S.W."/>
            <person name="Remacha M.A."/>
            <person name="Revuelta J.L."/>
            <person name="Rieger M."/>
            <person name="Salom D."/>
            <person name="Saluz H.P."/>
            <person name="Saiz J.E."/>
            <person name="Saren A.-M."/>
            <person name="Schaefer M."/>
            <person name="Scharfe M."/>
            <person name="Schmidt E.R."/>
            <person name="Schneider C."/>
            <person name="Scholler P."/>
            <person name="Schwarz S."/>
            <person name="Soler-Mira A."/>
            <person name="Urrestarazu L.A."/>
            <person name="Verhasselt P."/>
            <person name="Vissers S."/>
            <person name="Voet M."/>
            <person name="Volckaert G."/>
            <person name="Wagner G."/>
            <person name="Wambutt R."/>
            <person name="Wedler E."/>
            <person name="Wedler H."/>
            <person name="Woelfl S."/>
            <person name="Harris D.E."/>
            <person name="Bowman S."/>
            <person name="Brown D."/>
            <person name="Churcher C.M."/>
            <person name="Connor R."/>
            <person name="Dedman K."/>
            <person name="Gentles S."/>
            <person name="Hamlin N."/>
            <person name="Hunt S."/>
            <person name="Jones L."/>
            <person name="McDonald S."/>
            <person name="Murphy L.D."/>
            <person name="Niblett D."/>
            <person name="Odell C."/>
            <person name="Oliver K."/>
            <person name="Rajandream M.A."/>
            <person name="Richards C."/>
            <person name="Shore L."/>
            <person name="Walsh S.V."/>
            <person name="Barrell B.G."/>
            <person name="Dietrich F.S."/>
            <person name="Mulligan J.T."/>
            <person name="Allen E."/>
            <person name="Araujo R."/>
            <person name="Aviles E."/>
            <person name="Berno A."/>
            <person name="Carpenter J."/>
            <person name="Chen E."/>
            <person name="Cherry J.M."/>
            <person name="Chung E."/>
            <person name="Duncan M."/>
            <person name="Hunicke-Smith S."/>
            <person name="Hyman R.W."/>
            <person name="Komp C."/>
            <person name="Lashkari D."/>
            <person name="Lew H."/>
            <person name="Lin D."/>
            <person name="Mosedale D."/>
            <person name="Nakahara K."/>
            <person name="Namath A."/>
            <person name="Oefner P."/>
            <person name="Oh C."/>
            <person name="Petel F.X."/>
            <person name="Roberts D."/>
            <person name="Schramm S."/>
            <person name="Schroeder M."/>
            <person name="Shogren T."/>
            <person name="Shroff N."/>
            <person name="Winant A."/>
            <person name="Yelton M.A."/>
            <person name="Botstein D."/>
            <person name="Davis R.W."/>
            <person name="Johnston M."/>
            <person name="Andrews S."/>
            <person name="Brinkman R."/>
            <person name="Cooper J."/>
            <person name="Ding H."/>
            <person name="Du Z."/>
            <person name="Favello A."/>
            <person name="Fulton L."/>
            <person name="Gattung S."/>
            <person name="Greco T."/>
            <person name="Hallsworth K."/>
            <person name="Hawkins J."/>
            <person name="Hillier L.W."/>
            <person name="Jier M."/>
            <person name="Johnson D."/>
            <person name="Johnston L."/>
            <person name="Kirsten J."/>
            <person name="Kucaba T."/>
            <person name="Langston Y."/>
            <person name="Latreille P."/>
            <person name="Le T."/>
            <person name="Mardis E."/>
            <person name="Menezes S."/>
            <person name="Miller N."/>
            <person name="Nhan M."/>
            <person name="Pauley A."/>
            <person name="Peluso D."/>
            <person name="Rifkin L."/>
            <person name="Riles L."/>
            <person name="Taich A."/>
            <person name="Trevaskis E."/>
            <person name="Vignati D."/>
            <person name="Wilcox L."/>
            <person name="Wohldman P."/>
            <person name="Vaudin M."/>
            <person name="Wilson R."/>
            <person name="Waterston R."/>
            <person name="Albermann K."/>
            <person name="Hani J."/>
            <person name="Heumann K."/>
            <person name="Kleine K."/>
            <person name="Mewes H.-W."/>
            <person name="Zollner A."/>
            <person name="Zaccaria P."/>
        </authorList>
    </citation>
    <scope>NUCLEOTIDE SEQUENCE [LARGE SCALE GENOMIC DNA]</scope>
    <source>
        <strain>ATCC 204508 / S288c</strain>
    </source>
</reference>
<reference key="2">
    <citation type="journal article" date="2014" name="G3 (Bethesda)">
        <title>The reference genome sequence of Saccharomyces cerevisiae: Then and now.</title>
        <authorList>
            <person name="Engel S.R."/>
            <person name="Dietrich F.S."/>
            <person name="Fisk D.G."/>
            <person name="Binkley G."/>
            <person name="Balakrishnan R."/>
            <person name="Costanzo M.C."/>
            <person name="Dwight S.S."/>
            <person name="Hitz B.C."/>
            <person name="Karra K."/>
            <person name="Nash R.S."/>
            <person name="Weng S."/>
            <person name="Wong E.D."/>
            <person name="Lloyd P."/>
            <person name="Skrzypek M.S."/>
            <person name="Miyasato S.R."/>
            <person name="Simison M."/>
            <person name="Cherry J.M."/>
        </authorList>
    </citation>
    <scope>GENOME REANNOTATION</scope>
    <source>
        <strain>ATCC 204508 / S288c</strain>
    </source>
</reference>
<reference key="3">
    <citation type="journal article" date="1998" name="Genome Res.">
        <title>Transposable elements and genome organization: a comprehensive survey of retrotransposons revealed by the complete Saccharomyces cerevisiae genome sequence.</title>
        <authorList>
            <person name="Kim J.M."/>
            <person name="Vanguri S."/>
            <person name="Boeke J.D."/>
            <person name="Gabriel A."/>
            <person name="Voytas D.F."/>
        </authorList>
    </citation>
    <scope>NOMENCLATURE</scope>
</reference>
<reference key="4">
    <citation type="journal article" date="2002" name="Mol. Cell. Biol.">
        <title>Differential effects of chromatin and Gcn4 on the 50-fold range of expression among individual yeast Ty1 retrotransposons.</title>
        <authorList>
            <person name="Morillon A."/>
            <person name="Benard L."/>
            <person name="Springer M."/>
            <person name="Lesage P."/>
        </authorList>
    </citation>
    <scope>INDUCTION</scope>
</reference>
<reference key="5">
    <citation type="journal article" date="2005" name="Cytogenet. Genome Res.">
        <title>Happy together: the life and times of Ty retrotransposons and their hosts.</title>
        <authorList>
            <person name="Lesage P."/>
            <person name="Todeschini A.L."/>
        </authorList>
    </citation>
    <scope>REVIEW</scope>
</reference>
<accession>P0CX65</accession>
<accession>D3DM68</accession>
<accession>Q12231</accession>
<evidence type="ECO:0000250" key="1"/>
<evidence type="ECO:0000250" key="2">
    <source>
        <dbReference type="UniProtKB" id="Q12441"/>
    </source>
</evidence>
<evidence type="ECO:0000256" key="3">
    <source>
        <dbReference type="SAM" id="MobiDB-lite"/>
    </source>
</evidence>
<evidence type="ECO:0000269" key="4">
    <source>
    </source>
</evidence>